<evidence type="ECO:0000255" key="1">
    <source>
        <dbReference type="HAMAP-Rule" id="MF_01636"/>
    </source>
</evidence>
<sequence length="487" mass="54658">MIYHDLRDFVAQLEKMGELKRIATEVDPRLEMTEIADRVLRAGGPALLFEHPKGHRVPVLANLFGTVKRVALGMGEDDPARLREVGKLLAYLKEPEPPKGLRDAWDKWPVLKQVLNMAPKEVRSAPCQEMVWEGKDVDLSRLPIQHCWPGDVAPLITWGLTVTRGPHKKRQNLGIYRQQVIGPNKLIMRWLAHRGGALDFREHQQAHPGEAFPVAVALGADPATILGAVTPVPDTLSEYQFAGLLRGAKTEVVRCLGNTLQVPASSEIVLEGVIHPEETALEGPYGDHTGYYNEQETFPVFTVERITMRRDPIYHSTYTGKPPDEPAILGVALNEVFVPLLQKQFPEIVDFYLPPEGCSYRMAVVSMKKAYPGHAKRVMFGVWSFLRQFMYTKFILVTDDDVDVRDWKEVMWALTTRVDPARDTLLVENTPIDYLDFASPVSGLGSKMGIDATNKWPGETQREWGTPITMDAAVKARVDAIWQDLGL</sequence>
<dbReference type="EC" id="4.1.1.98" evidence="1"/>
<dbReference type="EMBL" id="CP000116">
    <property type="protein sequence ID" value="AAZ96057.1"/>
    <property type="molecule type" value="Genomic_DNA"/>
</dbReference>
<dbReference type="RefSeq" id="WP_011310617.1">
    <property type="nucleotide sequence ID" value="NC_007404.1"/>
</dbReference>
<dbReference type="SMR" id="Q3SMI8"/>
<dbReference type="STRING" id="292415.Tbd_0104"/>
<dbReference type="KEGG" id="tbd:Tbd_0104"/>
<dbReference type="eggNOG" id="COG0043">
    <property type="taxonomic scope" value="Bacteria"/>
</dbReference>
<dbReference type="HOGENOM" id="CLU_023348_4_1_4"/>
<dbReference type="OrthoDB" id="9809841at2"/>
<dbReference type="UniPathway" id="UPA00232"/>
<dbReference type="Proteomes" id="UP000008291">
    <property type="component" value="Chromosome"/>
</dbReference>
<dbReference type="GO" id="GO:0005829">
    <property type="term" value="C:cytosol"/>
    <property type="evidence" value="ECO:0007669"/>
    <property type="project" value="TreeGrafter"/>
</dbReference>
<dbReference type="GO" id="GO:0005886">
    <property type="term" value="C:plasma membrane"/>
    <property type="evidence" value="ECO:0007669"/>
    <property type="project" value="UniProtKB-SubCell"/>
</dbReference>
<dbReference type="GO" id="GO:0008694">
    <property type="term" value="F:3-octaprenyl-4-hydroxybenzoate carboxy-lyase activity"/>
    <property type="evidence" value="ECO:0007669"/>
    <property type="project" value="UniProtKB-UniRule"/>
</dbReference>
<dbReference type="GO" id="GO:0046872">
    <property type="term" value="F:metal ion binding"/>
    <property type="evidence" value="ECO:0007669"/>
    <property type="project" value="UniProtKB-KW"/>
</dbReference>
<dbReference type="GO" id="GO:0006744">
    <property type="term" value="P:ubiquinone biosynthetic process"/>
    <property type="evidence" value="ECO:0007669"/>
    <property type="project" value="UniProtKB-UniRule"/>
</dbReference>
<dbReference type="FunFam" id="1.20.5.570:FF:000001">
    <property type="entry name" value="3-octaprenyl-4-hydroxybenzoate carboxy-lyase"/>
    <property type="match status" value="1"/>
</dbReference>
<dbReference type="FunFam" id="3.40.1670.10:FF:000001">
    <property type="entry name" value="3-octaprenyl-4-hydroxybenzoate carboxy-lyase"/>
    <property type="match status" value="1"/>
</dbReference>
<dbReference type="Gene3D" id="1.20.5.570">
    <property type="entry name" value="Single helix bin"/>
    <property type="match status" value="1"/>
</dbReference>
<dbReference type="Gene3D" id="3.40.1670.10">
    <property type="entry name" value="UbiD C-terminal domain-like"/>
    <property type="match status" value="1"/>
</dbReference>
<dbReference type="HAMAP" id="MF_01636">
    <property type="entry name" value="UbiD"/>
    <property type="match status" value="1"/>
</dbReference>
<dbReference type="InterPro" id="IPR002830">
    <property type="entry name" value="UbiD"/>
</dbReference>
<dbReference type="InterPro" id="IPR049381">
    <property type="entry name" value="UbiD-like_C"/>
</dbReference>
<dbReference type="InterPro" id="IPR049383">
    <property type="entry name" value="UbiD-like_N"/>
</dbReference>
<dbReference type="InterPro" id="IPR023677">
    <property type="entry name" value="UbiD_bacteria"/>
</dbReference>
<dbReference type="InterPro" id="IPR048304">
    <property type="entry name" value="UbiD_Rift_dom"/>
</dbReference>
<dbReference type="NCBIfam" id="NF008175">
    <property type="entry name" value="PRK10922.1"/>
    <property type="match status" value="1"/>
</dbReference>
<dbReference type="NCBIfam" id="TIGR00148">
    <property type="entry name" value="UbiD family decarboxylase"/>
    <property type="match status" value="1"/>
</dbReference>
<dbReference type="PANTHER" id="PTHR30108">
    <property type="entry name" value="3-OCTAPRENYL-4-HYDROXYBENZOATE CARBOXY-LYASE-RELATED"/>
    <property type="match status" value="1"/>
</dbReference>
<dbReference type="PANTHER" id="PTHR30108:SF17">
    <property type="entry name" value="FERULIC ACID DECARBOXYLASE 1"/>
    <property type="match status" value="1"/>
</dbReference>
<dbReference type="Pfam" id="PF01977">
    <property type="entry name" value="UbiD"/>
    <property type="match status" value="1"/>
</dbReference>
<dbReference type="Pfam" id="PF20696">
    <property type="entry name" value="UbiD_C"/>
    <property type="match status" value="1"/>
</dbReference>
<dbReference type="Pfam" id="PF20695">
    <property type="entry name" value="UbiD_N"/>
    <property type="match status" value="1"/>
</dbReference>
<dbReference type="SUPFAM" id="SSF50475">
    <property type="entry name" value="FMN-binding split barrel"/>
    <property type="match status" value="1"/>
</dbReference>
<dbReference type="SUPFAM" id="SSF143968">
    <property type="entry name" value="UbiD C-terminal domain-like"/>
    <property type="match status" value="1"/>
</dbReference>
<keyword id="KW-1003">Cell membrane</keyword>
<keyword id="KW-0210">Decarboxylase</keyword>
<keyword id="KW-0285">Flavoprotein</keyword>
<keyword id="KW-0288">FMN</keyword>
<keyword id="KW-0456">Lyase</keyword>
<keyword id="KW-0464">Manganese</keyword>
<keyword id="KW-0472">Membrane</keyword>
<keyword id="KW-0479">Metal-binding</keyword>
<keyword id="KW-1185">Reference proteome</keyword>
<keyword id="KW-0831">Ubiquinone biosynthesis</keyword>
<proteinExistence type="inferred from homology"/>
<protein>
    <recommendedName>
        <fullName evidence="1">3-octaprenyl-4-hydroxybenzoate carboxy-lyase</fullName>
        <ecNumber evidence="1">4.1.1.98</ecNumber>
    </recommendedName>
    <alternativeName>
        <fullName evidence="1">Polyprenyl p-hydroxybenzoate decarboxylase</fullName>
    </alternativeName>
</protein>
<gene>
    <name evidence="1" type="primary">ubiD</name>
    <name type="ordered locus">Tbd_0104</name>
</gene>
<feature type="chain" id="PRO_0000267704" description="3-octaprenyl-4-hydroxybenzoate carboxy-lyase">
    <location>
        <begin position="1"/>
        <end position="487"/>
    </location>
</feature>
<feature type="active site" description="Proton donor" evidence="1">
    <location>
        <position position="287"/>
    </location>
</feature>
<feature type="binding site" evidence="1">
    <location>
        <position position="172"/>
    </location>
    <ligand>
        <name>Mn(2+)</name>
        <dbReference type="ChEBI" id="CHEBI:29035"/>
    </ligand>
</feature>
<feature type="binding site" evidence="1">
    <location>
        <begin position="175"/>
        <end position="177"/>
    </location>
    <ligand>
        <name>prenylated FMN</name>
        <dbReference type="ChEBI" id="CHEBI:87746"/>
    </ligand>
</feature>
<feature type="binding site" evidence="1">
    <location>
        <begin position="189"/>
        <end position="191"/>
    </location>
    <ligand>
        <name>prenylated FMN</name>
        <dbReference type="ChEBI" id="CHEBI:87746"/>
    </ligand>
</feature>
<feature type="binding site" evidence="1">
    <location>
        <begin position="194"/>
        <end position="195"/>
    </location>
    <ligand>
        <name>prenylated FMN</name>
        <dbReference type="ChEBI" id="CHEBI:87746"/>
    </ligand>
</feature>
<feature type="binding site" evidence="1">
    <location>
        <position position="238"/>
    </location>
    <ligand>
        <name>Mn(2+)</name>
        <dbReference type="ChEBI" id="CHEBI:29035"/>
    </ligand>
</feature>
<accession>Q3SMI8</accession>
<name>UBID_THIDA</name>
<comment type="function">
    <text evidence="1">Catalyzes the decarboxylation of 3-octaprenyl-4-hydroxy benzoate to 2-octaprenylphenol, an intermediate step in ubiquinone biosynthesis.</text>
</comment>
<comment type="catalytic activity">
    <reaction evidence="1">
        <text>a 4-hydroxy-3-(all-trans-polyprenyl)benzoate + H(+) = a 2-(all-trans-polyprenyl)phenol + CO2</text>
        <dbReference type="Rhea" id="RHEA:41680"/>
        <dbReference type="Rhea" id="RHEA-COMP:9514"/>
        <dbReference type="Rhea" id="RHEA-COMP:9516"/>
        <dbReference type="ChEBI" id="CHEBI:1269"/>
        <dbReference type="ChEBI" id="CHEBI:15378"/>
        <dbReference type="ChEBI" id="CHEBI:16526"/>
        <dbReference type="ChEBI" id="CHEBI:78396"/>
        <dbReference type="EC" id="4.1.1.98"/>
    </reaction>
</comment>
<comment type="cofactor">
    <cofactor evidence="1">
        <name>prenylated FMN</name>
        <dbReference type="ChEBI" id="CHEBI:87746"/>
    </cofactor>
    <text evidence="1">Binds 1 prenylated FMN per subunit.</text>
</comment>
<comment type="cofactor">
    <cofactor evidence="1">
        <name>Mn(2+)</name>
        <dbReference type="ChEBI" id="CHEBI:29035"/>
    </cofactor>
</comment>
<comment type="pathway">
    <text evidence="1">Cofactor biosynthesis; ubiquinone biosynthesis.</text>
</comment>
<comment type="subunit">
    <text evidence="1">Homohexamer.</text>
</comment>
<comment type="subcellular location">
    <subcellularLocation>
        <location evidence="1">Cell membrane</location>
        <topology evidence="1">Peripheral membrane protein</topology>
    </subcellularLocation>
</comment>
<comment type="similarity">
    <text evidence="1">Belongs to the UbiD family.</text>
</comment>
<organism>
    <name type="scientific">Thiobacillus denitrificans (strain ATCC 25259 / T1)</name>
    <dbReference type="NCBI Taxonomy" id="292415"/>
    <lineage>
        <taxon>Bacteria</taxon>
        <taxon>Pseudomonadati</taxon>
        <taxon>Pseudomonadota</taxon>
        <taxon>Betaproteobacteria</taxon>
        <taxon>Nitrosomonadales</taxon>
        <taxon>Thiobacillaceae</taxon>
        <taxon>Thiobacillus</taxon>
    </lineage>
</organism>
<reference key="1">
    <citation type="journal article" date="2006" name="J. Bacteriol.">
        <title>The genome sequence of the obligately chemolithoautotrophic, facultatively anaerobic bacterium Thiobacillus denitrificans.</title>
        <authorList>
            <person name="Beller H.R."/>
            <person name="Chain P.S."/>
            <person name="Letain T.E."/>
            <person name="Chakicherla A."/>
            <person name="Larimer F.W."/>
            <person name="Richardson P.M."/>
            <person name="Coleman M.A."/>
            <person name="Wood A.P."/>
            <person name="Kelly D.P."/>
        </authorList>
    </citation>
    <scope>NUCLEOTIDE SEQUENCE [LARGE SCALE GENOMIC DNA]</scope>
    <source>
        <strain>ATCC 25259 / T1</strain>
    </source>
</reference>